<comment type="similarity">
    <text evidence="1">Belongs to the RemA family.</text>
</comment>
<organism>
    <name type="scientific">Acetivibrio thermocellus (strain ATCC 27405 / DSM 1237 / JCM 9322 / NBRC 103400 / NCIMB 10682 / NRRL B-4536 / VPI 7372)</name>
    <name type="common">Clostridium thermocellum</name>
    <dbReference type="NCBI Taxonomy" id="203119"/>
    <lineage>
        <taxon>Bacteria</taxon>
        <taxon>Bacillati</taxon>
        <taxon>Bacillota</taxon>
        <taxon>Clostridia</taxon>
        <taxon>Eubacteriales</taxon>
        <taxon>Oscillospiraceae</taxon>
        <taxon>Acetivibrio</taxon>
    </lineage>
</organism>
<feature type="chain" id="PRO_0000292134" description="Putative regulatory protein Cthe_1316">
    <location>
        <begin position="1"/>
        <end position="93"/>
    </location>
</feature>
<feature type="region of interest" description="Disordered" evidence="2">
    <location>
        <begin position="74"/>
        <end position="93"/>
    </location>
</feature>
<feature type="compositionally biased region" description="Acidic residues" evidence="2">
    <location>
        <begin position="81"/>
        <end position="93"/>
    </location>
</feature>
<name>Y1316_ACET2</name>
<evidence type="ECO:0000255" key="1">
    <source>
        <dbReference type="HAMAP-Rule" id="MF_01503"/>
    </source>
</evidence>
<evidence type="ECO:0000256" key="2">
    <source>
        <dbReference type="SAM" id="MobiDB-lite"/>
    </source>
</evidence>
<sequence>MKLINIGFGNIVSANRLVAIVSPESAPIKRIIQEARERGMLVDATYGRRTRAVIITDSDHIILSAVQPETVAHRLNTKEAEDVEVDDEEEIDE</sequence>
<reference key="1">
    <citation type="submission" date="2007-02" db="EMBL/GenBank/DDBJ databases">
        <title>Complete sequence of Clostridium thermocellum ATCC 27405.</title>
        <authorList>
            <consortium name="US DOE Joint Genome Institute"/>
            <person name="Copeland A."/>
            <person name="Lucas S."/>
            <person name="Lapidus A."/>
            <person name="Barry K."/>
            <person name="Detter J.C."/>
            <person name="Glavina del Rio T."/>
            <person name="Hammon N."/>
            <person name="Israni S."/>
            <person name="Dalin E."/>
            <person name="Tice H."/>
            <person name="Pitluck S."/>
            <person name="Chertkov O."/>
            <person name="Brettin T."/>
            <person name="Bruce D."/>
            <person name="Han C."/>
            <person name="Tapia R."/>
            <person name="Gilna P."/>
            <person name="Schmutz J."/>
            <person name="Larimer F."/>
            <person name="Land M."/>
            <person name="Hauser L."/>
            <person name="Kyrpides N."/>
            <person name="Mikhailova N."/>
            <person name="Wu J.H.D."/>
            <person name="Newcomb M."/>
            <person name="Richardson P."/>
        </authorList>
    </citation>
    <scope>NUCLEOTIDE SEQUENCE [LARGE SCALE GENOMIC DNA]</scope>
    <source>
        <strain>ATCC 27405 / DSM 1237 / JCM 9322 / NBRC 103400 / NCIMB 10682 / NRRL B-4536 / VPI 7372</strain>
    </source>
</reference>
<protein>
    <recommendedName>
        <fullName evidence="1">Putative regulatory protein Cthe_1316</fullName>
    </recommendedName>
</protein>
<gene>
    <name type="ordered locus">Cthe_1316</name>
</gene>
<keyword id="KW-1185">Reference proteome</keyword>
<accession>A3DF19</accession>
<dbReference type="EMBL" id="CP000568">
    <property type="protein sequence ID" value="ABN52548.1"/>
    <property type="molecule type" value="Genomic_DNA"/>
</dbReference>
<dbReference type="SMR" id="A3DF19"/>
<dbReference type="STRING" id="203119.Cthe_1316"/>
<dbReference type="KEGG" id="cth:Cthe_1316"/>
<dbReference type="eggNOG" id="COG2052">
    <property type="taxonomic scope" value="Bacteria"/>
</dbReference>
<dbReference type="HOGENOM" id="CLU_165326_0_0_9"/>
<dbReference type="Proteomes" id="UP000002145">
    <property type="component" value="Chromosome"/>
</dbReference>
<dbReference type="HAMAP" id="MF_01503">
    <property type="entry name" value="RemA"/>
    <property type="match status" value="1"/>
</dbReference>
<dbReference type="InterPro" id="IPR007169">
    <property type="entry name" value="RemA-like"/>
</dbReference>
<dbReference type="NCBIfam" id="NF046064">
    <property type="entry name" value="MtxBflmRegRemA"/>
    <property type="match status" value="1"/>
</dbReference>
<dbReference type="NCBIfam" id="NF003315">
    <property type="entry name" value="PRK04323.1"/>
    <property type="match status" value="1"/>
</dbReference>
<dbReference type="PANTHER" id="PTHR38449:SF1">
    <property type="entry name" value="REGULATORY PROTEIN SSL2874-RELATED"/>
    <property type="match status" value="1"/>
</dbReference>
<dbReference type="PANTHER" id="PTHR38449">
    <property type="entry name" value="REGULATORY PROTEIN TM_1690-RELATED"/>
    <property type="match status" value="1"/>
</dbReference>
<dbReference type="Pfam" id="PF04025">
    <property type="entry name" value="RemA-like"/>
    <property type="match status" value="1"/>
</dbReference>
<proteinExistence type="inferred from homology"/>